<reference key="1">
    <citation type="journal article" date="2004" name="Science">
        <title>The 1.2-megabase genome sequence of Mimivirus.</title>
        <authorList>
            <person name="Raoult D."/>
            <person name="Audic S."/>
            <person name="Robert C."/>
            <person name="Abergel C."/>
            <person name="Renesto P."/>
            <person name="Ogata H."/>
            <person name="La Scola B."/>
            <person name="Susan M."/>
            <person name="Claverie J.-M."/>
        </authorList>
    </citation>
    <scope>NUCLEOTIDE SEQUENCE [LARGE SCALE GENOMIC DNA]</scope>
    <source>
        <strain>Rowbotham-Bradford</strain>
    </source>
</reference>
<accession>Q5UQF6</accession>
<sequence>MAFSKKNNIFGSNNIFTILKTLKDESLLKENDSKNLEQKNNSFNVPKILNNVNISTNCEVNTSKILNYRGLTKGLKESNSTITNNGIFVDNKILISFDDIREMYSYYADYRIKLQYILLNRQKSILETIHSLDNKKGELFKMRFNYNEIVSNEFKIRKCIKLCMVYQNLIELYKLVLRLFDLLKIMTIDNGTNVIVMLNVSDLSIEKKKQFFESKQKIERYLVQTKNILNLLDGSFEKYKSTISQFLDYIDDTIKQFSTLSREETKILSSKTSEMFRQVDDYLRQIINDFDPHTNCEYYVSIDLENSNPINPVGIRHCTYIKCDSELNLAIKNKKIDKNILENISQEELEKLFTHVKRTNDDDFIRIYHGEPQMCPIININFFVENKIPLSGVSVGITNLPKNATILTSIINNHRQYNKYDDEIIPVPLYSNHMFETYVNNVLSDMTDDEYNNLNHFLKIKYNKEDTNNTKFIVDYLFEELADSSQESNLIKPEMFESFARLVQSNSYYGR</sequence>
<organismHost>
    <name type="scientific">Acanthamoeba polyphaga</name>
    <name type="common">Amoeba</name>
    <dbReference type="NCBI Taxonomy" id="5757"/>
</organismHost>
<keyword id="KW-1185">Reference proteome</keyword>
<gene>
    <name type="ordered locus">MIMI_L490</name>
</gene>
<dbReference type="EMBL" id="AY653733">
    <property type="protein sequence ID" value="AAV50756.1"/>
    <property type="molecule type" value="Genomic_DNA"/>
</dbReference>
<dbReference type="SMR" id="Q5UQF6"/>
<dbReference type="KEGG" id="vg:9925120"/>
<dbReference type="OrthoDB" id="32003at10239"/>
<dbReference type="Proteomes" id="UP000001134">
    <property type="component" value="Genome"/>
</dbReference>
<proteinExistence type="predicted"/>
<name>YL490_MIMIV</name>
<protein>
    <recommendedName>
        <fullName>Uncharacterized protein L490</fullName>
    </recommendedName>
</protein>
<feature type="chain" id="PRO_0000244001" description="Uncharacterized protein L490">
    <location>
        <begin position="1"/>
        <end position="511"/>
    </location>
</feature>
<organism>
    <name type="scientific">Acanthamoeba polyphaga mimivirus</name>
    <name type="common">APMV</name>
    <dbReference type="NCBI Taxonomy" id="212035"/>
    <lineage>
        <taxon>Viruses</taxon>
        <taxon>Varidnaviria</taxon>
        <taxon>Bamfordvirae</taxon>
        <taxon>Nucleocytoviricota</taxon>
        <taxon>Megaviricetes</taxon>
        <taxon>Imitervirales</taxon>
        <taxon>Mimiviridae</taxon>
        <taxon>Megamimivirinae</taxon>
        <taxon>Mimivirus</taxon>
        <taxon>Mimivirus bradfordmassiliense</taxon>
    </lineage>
</organism>